<accession>Q73Y21</accession>
<name>SYG_MYCPA</name>
<comment type="function">
    <text evidence="1">Catalyzes the attachment of glycine to tRNA(Gly).</text>
</comment>
<comment type="catalytic activity">
    <reaction evidence="1">
        <text>tRNA(Gly) + glycine + ATP = glycyl-tRNA(Gly) + AMP + diphosphate</text>
        <dbReference type="Rhea" id="RHEA:16013"/>
        <dbReference type="Rhea" id="RHEA-COMP:9664"/>
        <dbReference type="Rhea" id="RHEA-COMP:9683"/>
        <dbReference type="ChEBI" id="CHEBI:30616"/>
        <dbReference type="ChEBI" id="CHEBI:33019"/>
        <dbReference type="ChEBI" id="CHEBI:57305"/>
        <dbReference type="ChEBI" id="CHEBI:78442"/>
        <dbReference type="ChEBI" id="CHEBI:78522"/>
        <dbReference type="ChEBI" id="CHEBI:456215"/>
        <dbReference type="EC" id="6.1.1.14"/>
    </reaction>
</comment>
<comment type="subunit">
    <text evidence="1">Homodimer.</text>
</comment>
<comment type="subcellular location">
    <subcellularLocation>
        <location evidence="1">Cytoplasm</location>
    </subcellularLocation>
</comment>
<comment type="similarity">
    <text evidence="1">Belongs to the class-II aminoacyl-tRNA synthetase family.</text>
</comment>
<reference key="1">
    <citation type="journal article" date="2005" name="Proc. Natl. Acad. Sci. U.S.A.">
        <title>The complete genome sequence of Mycobacterium avium subspecies paratuberculosis.</title>
        <authorList>
            <person name="Li L."/>
            <person name="Bannantine J.P."/>
            <person name="Zhang Q."/>
            <person name="Amonsin A."/>
            <person name="May B.J."/>
            <person name="Alt D."/>
            <person name="Banerji N."/>
            <person name="Kanjilal S."/>
            <person name="Kapur V."/>
        </authorList>
    </citation>
    <scope>NUCLEOTIDE SEQUENCE [LARGE SCALE GENOMIC DNA]</scope>
    <source>
        <strain>ATCC BAA-968 / K-10</strain>
    </source>
</reference>
<sequence>MHRLVASVIDTVVNLAKRRGFVYPSGEIYGGTRSAWDYGPLGVEFKENIKRQWWRSVVTGREDVVGLDSSIILPRQVWVASGHVEVFHDPLVESLITHKRYRADHLIEAYEAKHGHPPPNGLADIRDPDTGEPGRWTEPREFNMMLKTYLGPIETEEGLHYLRPETAQGIFVNFANVVTTARKKPPFGIGQIGKSFRNEITPGNFIFRTREFEQMEMEFFVEPSTAKEWHQYWIDTRLQWYVELGIDPQNLRLFEHPADKLSHYSDRTVDIEYKFGFAGNPWGELEGVANRTDFDLSTHSKHSGVDLSFYDQATDSRYIPYVIEPAAGLTRSFMAFLIDAYVEDEAPNAKGKMEKRAVLRLDPRLAPVKAAVLPLSRHADLSPKARDLAAELRRFWNIEFDDAGAIGRRYRRQDEIGTPFCVTVDFDSLEDNAVTVRRRDDMSQERIGMDAVADYLSARLKGC</sequence>
<dbReference type="EC" id="6.1.1.14" evidence="1"/>
<dbReference type="EMBL" id="AE016958">
    <property type="protein sequence ID" value="AAS04454.1"/>
    <property type="molecule type" value="Genomic_DNA"/>
</dbReference>
<dbReference type="RefSeq" id="WP_010949492.1">
    <property type="nucleotide sequence ID" value="NZ_CP106873.1"/>
</dbReference>
<dbReference type="SMR" id="Q73Y21"/>
<dbReference type="STRING" id="262316.MAP_2137c"/>
<dbReference type="KEGG" id="mpa:MAP_2137c"/>
<dbReference type="eggNOG" id="COG0423">
    <property type="taxonomic scope" value="Bacteria"/>
</dbReference>
<dbReference type="HOGENOM" id="CLU_015515_2_1_11"/>
<dbReference type="Proteomes" id="UP000000580">
    <property type="component" value="Chromosome"/>
</dbReference>
<dbReference type="GO" id="GO:0005737">
    <property type="term" value="C:cytoplasm"/>
    <property type="evidence" value="ECO:0007669"/>
    <property type="project" value="UniProtKB-SubCell"/>
</dbReference>
<dbReference type="GO" id="GO:0005524">
    <property type="term" value="F:ATP binding"/>
    <property type="evidence" value="ECO:0007669"/>
    <property type="project" value="UniProtKB-UniRule"/>
</dbReference>
<dbReference type="GO" id="GO:0004820">
    <property type="term" value="F:glycine-tRNA ligase activity"/>
    <property type="evidence" value="ECO:0000250"/>
    <property type="project" value="UniProtKB"/>
</dbReference>
<dbReference type="GO" id="GO:0046983">
    <property type="term" value="F:protein dimerization activity"/>
    <property type="evidence" value="ECO:0000250"/>
    <property type="project" value="UniProtKB"/>
</dbReference>
<dbReference type="GO" id="GO:0006426">
    <property type="term" value="P:glycyl-tRNA aminoacylation"/>
    <property type="evidence" value="ECO:0007669"/>
    <property type="project" value="UniProtKB-UniRule"/>
</dbReference>
<dbReference type="CDD" id="cd00774">
    <property type="entry name" value="GlyRS-like_core"/>
    <property type="match status" value="1"/>
</dbReference>
<dbReference type="CDD" id="cd00858">
    <property type="entry name" value="GlyRS_anticodon"/>
    <property type="match status" value="1"/>
</dbReference>
<dbReference type="FunFam" id="3.40.50.800:FF:000002">
    <property type="entry name" value="Glycine--tRNA ligase"/>
    <property type="match status" value="1"/>
</dbReference>
<dbReference type="Gene3D" id="3.40.50.800">
    <property type="entry name" value="Anticodon-binding domain"/>
    <property type="match status" value="1"/>
</dbReference>
<dbReference type="Gene3D" id="3.30.930.10">
    <property type="entry name" value="Bira Bifunctional Protein, Domain 2"/>
    <property type="match status" value="1"/>
</dbReference>
<dbReference type="HAMAP" id="MF_00253_B">
    <property type="entry name" value="Gly_tRNA_synth_B"/>
    <property type="match status" value="1"/>
</dbReference>
<dbReference type="InterPro" id="IPR002314">
    <property type="entry name" value="aa-tRNA-synt_IIb"/>
</dbReference>
<dbReference type="InterPro" id="IPR006195">
    <property type="entry name" value="aa-tRNA-synth_II"/>
</dbReference>
<dbReference type="InterPro" id="IPR045864">
    <property type="entry name" value="aa-tRNA-synth_II/BPL/LPL"/>
</dbReference>
<dbReference type="InterPro" id="IPR004154">
    <property type="entry name" value="Anticodon-bd"/>
</dbReference>
<dbReference type="InterPro" id="IPR036621">
    <property type="entry name" value="Anticodon-bd_dom_sf"/>
</dbReference>
<dbReference type="InterPro" id="IPR027031">
    <property type="entry name" value="Gly-tRNA_synthase/POLG2"/>
</dbReference>
<dbReference type="InterPro" id="IPR022961">
    <property type="entry name" value="Gly_tRNA_ligase_bac"/>
</dbReference>
<dbReference type="InterPro" id="IPR033731">
    <property type="entry name" value="GlyRS-like_core"/>
</dbReference>
<dbReference type="InterPro" id="IPR002315">
    <property type="entry name" value="tRNA-synt_gly"/>
</dbReference>
<dbReference type="NCBIfam" id="TIGR00389">
    <property type="entry name" value="glyS_dimeric"/>
    <property type="match status" value="1"/>
</dbReference>
<dbReference type="NCBIfam" id="NF003211">
    <property type="entry name" value="PRK04173.1"/>
    <property type="match status" value="1"/>
</dbReference>
<dbReference type="PANTHER" id="PTHR10745:SF8">
    <property type="entry name" value="DNA POLYMERASE SUBUNIT GAMMA-2, MITOCHONDRIAL"/>
    <property type="match status" value="1"/>
</dbReference>
<dbReference type="PANTHER" id="PTHR10745">
    <property type="entry name" value="GLYCYL-TRNA SYNTHETASE/DNA POLYMERASE SUBUNIT GAMMA-2"/>
    <property type="match status" value="1"/>
</dbReference>
<dbReference type="Pfam" id="PF03129">
    <property type="entry name" value="HGTP_anticodon"/>
    <property type="match status" value="1"/>
</dbReference>
<dbReference type="Pfam" id="PF00587">
    <property type="entry name" value="tRNA-synt_2b"/>
    <property type="match status" value="1"/>
</dbReference>
<dbReference type="PRINTS" id="PR01043">
    <property type="entry name" value="TRNASYNTHGLY"/>
</dbReference>
<dbReference type="SUPFAM" id="SSF52954">
    <property type="entry name" value="Class II aaRS ABD-related"/>
    <property type="match status" value="1"/>
</dbReference>
<dbReference type="SUPFAM" id="SSF55681">
    <property type="entry name" value="Class II aaRS and biotin synthetases"/>
    <property type="match status" value="1"/>
</dbReference>
<dbReference type="PROSITE" id="PS50862">
    <property type="entry name" value="AA_TRNA_LIGASE_II"/>
    <property type="match status" value="1"/>
</dbReference>
<organism>
    <name type="scientific">Mycolicibacterium paratuberculosis (strain ATCC BAA-968 / K-10)</name>
    <name type="common">Mycobacterium paratuberculosis</name>
    <dbReference type="NCBI Taxonomy" id="262316"/>
    <lineage>
        <taxon>Bacteria</taxon>
        <taxon>Bacillati</taxon>
        <taxon>Actinomycetota</taxon>
        <taxon>Actinomycetes</taxon>
        <taxon>Mycobacteriales</taxon>
        <taxon>Mycobacteriaceae</taxon>
        <taxon>Mycobacterium</taxon>
        <taxon>Mycobacterium avium complex (MAC)</taxon>
    </lineage>
</organism>
<feature type="chain" id="PRO_0000072966" description="Glycine--tRNA ligase">
    <location>
        <begin position="1"/>
        <end position="463"/>
    </location>
</feature>
<feature type="region of interest" description="Disordered" evidence="2">
    <location>
        <begin position="113"/>
        <end position="134"/>
    </location>
</feature>
<feature type="binding site" evidence="1">
    <location>
        <position position="102"/>
    </location>
    <ligand>
        <name>substrate</name>
    </ligand>
</feature>
<feature type="binding site" evidence="1">
    <location>
        <position position="165"/>
    </location>
    <ligand>
        <name>substrate</name>
    </ligand>
</feature>
<feature type="binding site" evidence="1">
    <location>
        <begin position="197"/>
        <end position="199"/>
    </location>
    <ligand>
        <name>ATP</name>
        <dbReference type="ChEBI" id="CHEBI:30616"/>
    </ligand>
</feature>
<feature type="binding site" evidence="1">
    <location>
        <begin position="207"/>
        <end position="212"/>
    </location>
    <ligand>
        <name>ATP</name>
        <dbReference type="ChEBI" id="CHEBI:30616"/>
    </ligand>
</feature>
<feature type="binding site" evidence="1">
    <location>
        <begin position="212"/>
        <end position="216"/>
    </location>
    <ligand>
        <name>substrate</name>
    </ligand>
</feature>
<feature type="binding site" evidence="1">
    <location>
        <begin position="284"/>
        <end position="285"/>
    </location>
    <ligand>
        <name>ATP</name>
        <dbReference type="ChEBI" id="CHEBI:30616"/>
    </ligand>
</feature>
<feature type="binding site" evidence="1">
    <location>
        <begin position="324"/>
        <end position="328"/>
    </location>
    <ligand>
        <name>substrate</name>
    </ligand>
</feature>
<feature type="binding site" evidence="1">
    <location>
        <begin position="328"/>
        <end position="331"/>
    </location>
    <ligand>
        <name>ATP</name>
        <dbReference type="ChEBI" id="CHEBI:30616"/>
    </ligand>
</feature>
<keyword id="KW-0030">Aminoacyl-tRNA synthetase</keyword>
<keyword id="KW-0067">ATP-binding</keyword>
<keyword id="KW-0963">Cytoplasm</keyword>
<keyword id="KW-0436">Ligase</keyword>
<keyword id="KW-0547">Nucleotide-binding</keyword>
<keyword id="KW-0648">Protein biosynthesis</keyword>
<keyword id="KW-1185">Reference proteome</keyword>
<gene>
    <name evidence="1" type="primary">glyQS</name>
    <name type="synonym">glyS</name>
    <name type="ordered locus">MAP_2137c</name>
</gene>
<evidence type="ECO:0000255" key="1">
    <source>
        <dbReference type="HAMAP-Rule" id="MF_00253"/>
    </source>
</evidence>
<evidence type="ECO:0000256" key="2">
    <source>
        <dbReference type="SAM" id="MobiDB-lite"/>
    </source>
</evidence>
<proteinExistence type="inferred from homology"/>
<protein>
    <recommendedName>
        <fullName evidence="1">Glycine--tRNA ligase</fullName>
        <ecNumber evidence="1">6.1.1.14</ecNumber>
    </recommendedName>
    <alternativeName>
        <fullName evidence="1">Glycyl-tRNA synthetase</fullName>
        <shortName evidence="1">GlyRS</shortName>
    </alternativeName>
</protein>